<protein>
    <recommendedName>
        <fullName evidence="1">Phosphopantetheine adenylyltransferase</fullName>
        <ecNumber evidence="1">2.7.7.3</ecNumber>
    </recommendedName>
    <alternativeName>
        <fullName evidence="1">Dephospho-CoA pyrophosphorylase</fullName>
    </alternativeName>
    <alternativeName>
        <fullName evidence="1">Pantetheine-phosphate adenylyltransferase</fullName>
        <shortName evidence="1">PPAT</shortName>
    </alternativeName>
</protein>
<keyword id="KW-0067">ATP-binding</keyword>
<keyword id="KW-0173">Coenzyme A biosynthesis</keyword>
<keyword id="KW-0963">Cytoplasm</keyword>
<keyword id="KW-0460">Magnesium</keyword>
<keyword id="KW-0547">Nucleotide-binding</keyword>
<keyword id="KW-0548">Nucleotidyltransferase</keyword>
<keyword id="KW-0808">Transferase</keyword>
<dbReference type="EC" id="2.7.7.3" evidence="1"/>
<dbReference type="EMBL" id="CP000825">
    <property type="protein sequence ID" value="ABV50623.1"/>
    <property type="molecule type" value="Genomic_DNA"/>
</dbReference>
<dbReference type="RefSeq" id="WP_012007710.1">
    <property type="nucleotide sequence ID" value="NC_009840.1"/>
</dbReference>
<dbReference type="SMR" id="A8G4U2"/>
<dbReference type="STRING" id="93060.P9215_10081"/>
<dbReference type="KEGG" id="pmh:P9215_10081"/>
<dbReference type="eggNOG" id="COG0669">
    <property type="taxonomic scope" value="Bacteria"/>
</dbReference>
<dbReference type="HOGENOM" id="CLU_100149_0_1_3"/>
<dbReference type="OrthoDB" id="9806661at2"/>
<dbReference type="UniPathway" id="UPA00241">
    <property type="reaction ID" value="UER00355"/>
</dbReference>
<dbReference type="Proteomes" id="UP000002014">
    <property type="component" value="Chromosome"/>
</dbReference>
<dbReference type="GO" id="GO:0005737">
    <property type="term" value="C:cytoplasm"/>
    <property type="evidence" value="ECO:0007669"/>
    <property type="project" value="UniProtKB-SubCell"/>
</dbReference>
<dbReference type="GO" id="GO:0005524">
    <property type="term" value="F:ATP binding"/>
    <property type="evidence" value="ECO:0007669"/>
    <property type="project" value="UniProtKB-KW"/>
</dbReference>
<dbReference type="GO" id="GO:0004595">
    <property type="term" value="F:pantetheine-phosphate adenylyltransferase activity"/>
    <property type="evidence" value="ECO:0007669"/>
    <property type="project" value="UniProtKB-UniRule"/>
</dbReference>
<dbReference type="GO" id="GO:0015937">
    <property type="term" value="P:coenzyme A biosynthetic process"/>
    <property type="evidence" value="ECO:0007669"/>
    <property type="project" value="UniProtKB-UniRule"/>
</dbReference>
<dbReference type="CDD" id="cd02163">
    <property type="entry name" value="PPAT"/>
    <property type="match status" value="1"/>
</dbReference>
<dbReference type="Gene3D" id="3.40.50.620">
    <property type="entry name" value="HUPs"/>
    <property type="match status" value="1"/>
</dbReference>
<dbReference type="HAMAP" id="MF_00151">
    <property type="entry name" value="PPAT_bact"/>
    <property type="match status" value="1"/>
</dbReference>
<dbReference type="InterPro" id="IPR004821">
    <property type="entry name" value="Cyt_trans-like"/>
</dbReference>
<dbReference type="InterPro" id="IPR001980">
    <property type="entry name" value="PPAT"/>
</dbReference>
<dbReference type="InterPro" id="IPR014729">
    <property type="entry name" value="Rossmann-like_a/b/a_fold"/>
</dbReference>
<dbReference type="NCBIfam" id="TIGR01510">
    <property type="entry name" value="coaD_prev_kdtB"/>
    <property type="match status" value="1"/>
</dbReference>
<dbReference type="NCBIfam" id="TIGR00125">
    <property type="entry name" value="cyt_tran_rel"/>
    <property type="match status" value="1"/>
</dbReference>
<dbReference type="PANTHER" id="PTHR21342">
    <property type="entry name" value="PHOSPHOPANTETHEINE ADENYLYLTRANSFERASE"/>
    <property type="match status" value="1"/>
</dbReference>
<dbReference type="PANTHER" id="PTHR21342:SF1">
    <property type="entry name" value="PHOSPHOPANTETHEINE ADENYLYLTRANSFERASE"/>
    <property type="match status" value="1"/>
</dbReference>
<dbReference type="Pfam" id="PF01467">
    <property type="entry name" value="CTP_transf_like"/>
    <property type="match status" value="1"/>
</dbReference>
<dbReference type="PRINTS" id="PR01020">
    <property type="entry name" value="LPSBIOSNTHSS"/>
</dbReference>
<dbReference type="SUPFAM" id="SSF52374">
    <property type="entry name" value="Nucleotidylyl transferase"/>
    <property type="match status" value="1"/>
</dbReference>
<name>COAD_PROM2</name>
<evidence type="ECO:0000255" key="1">
    <source>
        <dbReference type="HAMAP-Rule" id="MF_00151"/>
    </source>
</evidence>
<comment type="function">
    <text evidence="1">Reversibly transfers an adenylyl group from ATP to 4'-phosphopantetheine, yielding dephospho-CoA (dPCoA) and pyrophosphate.</text>
</comment>
<comment type="catalytic activity">
    <reaction evidence="1">
        <text>(R)-4'-phosphopantetheine + ATP + H(+) = 3'-dephospho-CoA + diphosphate</text>
        <dbReference type="Rhea" id="RHEA:19801"/>
        <dbReference type="ChEBI" id="CHEBI:15378"/>
        <dbReference type="ChEBI" id="CHEBI:30616"/>
        <dbReference type="ChEBI" id="CHEBI:33019"/>
        <dbReference type="ChEBI" id="CHEBI:57328"/>
        <dbReference type="ChEBI" id="CHEBI:61723"/>
        <dbReference type="EC" id="2.7.7.3"/>
    </reaction>
</comment>
<comment type="cofactor">
    <cofactor evidence="1">
        <name>Mg(2+)</name>
        <dbReference type="ChEBI" id="CHEBI:18420"/>
    </cofactor>
</comment>
<comment type="pathway">
    <text evidence="1">Cofactor biosynthesis; coenzyme A biosynthesis; CoA from (R)-pantothenate: step 4/5.</text>
</comment>
<comment type="subunit">
    <text evidence="1">Homohexamer.</text>
</comment>
<comment type="subcellular location">
    <subcellularLocation>
        <location evidence="1">Cytoplasm</location>
    </subcellularLocation>
</comment>
<comment type="similarity">
    <text evidence="1">Belongs to the bacterial CoaD family.</text>
</comment>
<sequence length="157" mass="17746">MKILYPGTFDPLTNGHIDLIERAEKIFGNLVVAVLENTSKTPTFNLQRRIIQIKNSLSHLPNIEVISYSGLTVDCANELKANLILRGLRAMSDFEYELQIAHTNKSLNNDIETIFLSTNTNYSFLSSSLVKEVAKFGGEINHMVPPSVERDLKEYFK</sequence>
<feature type="chain" id="PRO_1000058168" description="Phosphopantetheine adenylyltransferase">
    <location>
        <begin position="1"/>
        <end position="157"/>
    </location>
</feature>
<feature type="binding site" evidence="1">
    <location>
        <begin position="8"/>
        <end position="9"/>
    </location>
    <ligand>
        <name>ATP</name>
        <dbReference type="ChEBI" id="CHEBI:30616"/>
    </ligand>
</feature>
<feature type="binding site" evidence="1">
    <location>
        <position position="8"/>
    </location>
    <ligand>
        <name>substrate</name>
    </ligand>
</feature>
<feature type="binding site" evidence="1">
    <location>
        <position position="16"/>
    </location>
    <ligand>
        <name>ATP</name>
        <dbReference type="ChEBI" id="CHEBI:30616"/>
    </ligand>
</feature>
<feature type="binding site" evidence="1">
    <location>
        <position position="40"/>
    </location>
    <ligand>
        <name>substrate</name>
    </ligand>
</feature>
<feature type="binding site" evidence="1">
    <location>
        <position position="72"/>
    </location>
    <ligand>
        <name>substrate</name>
    </ligand>
</feature>
<feature type="binding site" evidence="1">
    <location>
        <position position="86"/>
    </location>
    <ligand>
        <name>substrate</name>
    </ligand>
</feature>
<feature type="binding site" evidence="1">
    <location>
        <begin position="87"/>
        <end position="89"/>
    </location>
    <ligand>
        <name>ATP</name>
        <dbReference type="ChEBI" id="CHEBI:30616"/>
    </ligand>
</feature>
<feature type="binding site" evidence="1">
    <location>
        <position position="97"/>
    </location>
    <ligand>
        <name>ATP</name>
        <dbReference type="ChEBI" id="CHEBI:30616"/>
    </ligand>
</feature>
<feature type="binding site" evidence="1">
    <location>
        <begin position="122"/>
        <end position="128"/>
    </location>
    <ligand>
        <name>ATP</name>
        <dbReference type="ChEBI" id="CHEBI:30616"/>
    </ligand>
</feature>
<feature type="site" description="Transition state stabilizer" evidence="1">
    <location>
        <position position="16"/>
    </location>
</feature>
<organism>
    <name type="scientific">Prochlorococcus marinus (strain MIT 9215)</name>
    <dbReference type="NCBI Taxonomy" id="93060"/>
    <lineage>
        <taxon>Bacteria</taxon>
        <taxon>Bacillati</taxon>
        <taxon>Cyanobacteriota</taxon>
        <taxon>Cyanophyceae</taxon>
        <taxon>Synechococcales</taxon>
        <taxon>Prochlorococcaceae</taxon>
        <taxon>Prochlorococcus</taxon>
    </lineage>
</organism>
<accession>A8G4U2</accession>
<gene>
    <name evidence="1" type="primary">coaD</name>
    <name type="ordered locus">P9215_10081</name>
</gene>
<proteinExistence type="inferred from homology"/>
<reference key="1">
    <citation type="journal article" date="2007" name="PLoS Genet.">
        <title>Patterns and implications of gene gain and loss in the evolution of Prochlorococcus.</title>
        <authorList>
            <person name="Kettler G.C."/>
            <person name="Martiny A.C."/>
            <person name="Huang K."/>
            <person name="Zucker J."/>
            <person name="Coleman M.L."/>
            <person name="Rodrigue S."/>
            <person name="Chen F."/>
            <person name="Lapidus A."/>
            <person name="Ferriera S."/>
            <person name="Johnson J."/>
            <person name="Steglich C."/>
            <person name="Church G.M."/>
            <person name="Richardson P."/>
            <person name="Chisholm S.W."/>
        </authorList>
    </citation>
    <scope>NUCLEOTIDE SEQUENCE [LARGE SCALE GENOMIC DNA]</scope>
    <source>
        <strain>MIT 9215</strain>
    </source>
</reference>